<keyword id="KW-0997">Cell inner membrane</keyword>
<keyword id="KW-1003">Cell membrane</keyword>
<keyword id="KW-0472">Membrane</keyword>
<keyword id="KW-1185">Reference proteome</keyword>
<keyword id="KW-0812">Transmembrane</keyword>
<keyword id="KW-1133">Transmembrane helix</keyword>
<name>Y810_CHRVO</name>
<protein>
    <recommendedName>
        <fullName evidence="1">UPF0761 membrane protein CV_0810</fullName>
    </recommendedName>
</protein>
<comment type="subcellular location">
    <subcellularLocation>
        <location evidence="1">Cell inner membrane</location>
        <topology evidence="1">Multi-pass membrane protein</topology>
    </subcellularLocation>
</comment>
<comment type="similarity">
    <text evidence="1">Belongs to the UPF0761 family.</text>
</comment>
<gene>
    <name type="ordered locus">CV_0810</name>
</gene>
<feature type="chain" id="PRO_0000391030" description="UPF0761 membrane protein CV_0810">
    <location>
        <begin position="1"/>
        <end position="417"/>
    </location>
</feature>
<feature type="transmembrane region" description="Helical" evidence="1">
    <location>
        <begin position="52"/>
        <end position="72"/>
    </location>
</feature>
<feature type="transmembrane region" description="Helical" evidence="1">
    <location>
        <begin position="79"/>
        <end position="99"/>
    </location>
</feature>
<feature type="transmembrane region" description="Helical" evidence="1">
    <location>
        <begin position="110"/>
        <end position="130"/>
    </location>
</feature>
<feature type="transmembrane region" description="Helical" evidence="1">
    <location>
        <begin position="150"/>
        <end position="170"/>
    </location>
</feature>
<feature type="transmembrane region" description="Helical" evidence="1">
    <location>
        <begin position="185"/>
        <end position="205"/>
    </location>
</feature>
<feature type="transmembrane region" description="Helical" evidence="1">
    <location>
        <begin position="214"/>
        <end position="234"/>
    </location>
</feature>
<feature type="transmembrane region" description="Helical" evidence="1">
    <location>
        <begin position="258"/>
        <end position="278"/>
    </location>
</feature>
<organism>
    <name type="scientific">Chromobacterium violaceum (strain ATCC 12472 / DSM 30191 / JCM 1249 / CCUG 213 / NBRC 12614 / NCIMB 9131 / NCTC 9757 / MK)</name>
    <dbReference type="NCBI Taxonomy" id="243365"/>
    <lineage>
        <taxon>Bacteria</taxon>
        <taxon>Pseudomonadati</taxon>
        <taxon>Pseudomonadota</taxon>
        <taxon>Betaproteobacteria</taxon>
        <taxon>Neisseriales</taxon>
        <taxon>Chromobacteriaceae</taxon>
        <taxon>Chromobacterium</taxon>
    </lineage>
</organism>
<dbReference type="EMBL" id="AE016825">
    <property type="protein sequence ID" value="AAQ58486.1"/>
    <property type="molecule type" value="Genomic_DNA"/>
</dbReference>
<dbReference type="SMR" id="Q7NZV9"/>
<dbReference type="STRING" id="243365.CV_0810"/>
<dbReference type="KEGG" id="cvi:CV_0810"/>
<dbReference type="eggNOG" id="COG1295">
    <property type="taxonomic scope" value="Bacteria"/>
</dbReference>
<dbReference type="eggNOG" id="COG1959">
    <property type="taxonomic scope" value="Bacteria"/>
</dbReference>
<dbReference type="HOGENOM" id="CLU_032288_1_0_4"/>
<dbReference type="Proteomes" id="UP000001424">
    <property type="component" value="Chromosome"/>
</dbReference>
<dbReference type="GO" id="GO:0005886">
    <property type="term" value="C:plasma membrane"/>
    <property type="evidence" value="ECO:0007669"/>
    <property type="project" value="UniProtKB-SubCell"/>
</dbReference>
<dbReference type="HAMAP" id="MF_00672">
    <property type="entry name" value="UPF0761"/>
    <property type="match status" value="1"/>
</dbReference>
<dbReference type="InterPro" id="IPR023679">
    <property type="entry name" value="UPF0761_bac"/>
</dbReference>
<dbReference type="InterPro" id="IPR017039">
    <property type="entry name" value="Virul_fac_BrkB"/>
</dbReference>
<dbReference type="NCBIfam" id="NF003256">
    <property type="entry name" value="PRK04214.1"/>
    <property type="match status" value="1"/>
</dbReference>
<dbReference type="NCBIfam" id="TIGR00765">
    <property type="entry name" value="yihY_not_rbn"/>
    <property type="match status" value="1"/>
</dbReference>
<dbReference type="PANTHER" id="PTHR30213">
    <property type="entry name" value="INNER MEMBRANE PROTEIN YHJD"/>
    <property type="match status" value="1"/>
</dbReference>
<dbReference type="PANTHER" id="PTHR30213:SF0">
    <property type="entry name" value="UPF0761 MEMBRANE PROTEIN YIHY"/>
    <property type="match status" value="1"/>
</dbReference>
<dbReference type="Pfam" id="PF03631">
    <property type="entry name" value="Virul_fac_BrkB"/>
    <property type="match status" value="1"/>
</dbReference>
<evidence type="ECO:0000255" key="1">
    <source>
        <dbReference type="HAMAP-Rule" id="MF_00672"/>
    </source>
</evidence>
<accession>Q7NZV9</accession>
<sequence length="417" mass="46597">MPPLLRGGFGITFAAMQVQRLEPYFGFARFIARRMSCLRVLQISGSLTFTTLLALVPLFTIALSVISAFPVFSDYSTRFKIMLLSTLVPEFAGKVITVYMRQFADNAEKLTAAGIVMLGVTALMLMSTIERTFNAIWGVRRGRPWLQQSMVYWTVLTLGPLVLGGSLLSWRWLFKATRLEKNLPLLASVLEAGGTIVLTALVLALLYRIVPNRFVPFRHAVWGALVTSVLLELTKMGFGFYIGQVASYQLVYGAFASIPIFLLWVYCLWLVVLAGAVFTSALSYWEGDAWRRRNEPHRRFQDALEVLLLLDAAHARGEALTPRQLRQQVKVGYDELGLVLDRLAQRGYVQKGHGDAWVLMRRAAAINLSDLFQIFVYRRDASAGDALDATLAELLGPLTEQLQAVTVADLARRVGRK</sequence>
<reference key="1">
    <citation type="journal article" date="2003" name="Proc. Natl. Acad. Sci. U.S.A.">
        <title>The complete genome sequence of Chromobacterium violaceum reveals remarkable and exploitable bacterial adaptability.</title>
        <authorList>
            <person name="Vasconcelos A.T.R."/>
            <person name="de Almeida D.F."/>
            <person name="Hungria M."/>
            <person name="Guimaraes C.T."/>
            <person name="Antonio R.V."/>
            <person name="Almeida F.C."/>
            <person name="de Almeida L.G.P."/>
            <person name="de Almeida R."/>
            <person name="Alves-Gomes J.A."/>
            <person name="Andrade E.M."/>
            <person name="Araripe J."/>
            <person name="de Araujo M.F.F."/>
            <person name="Astolfi-Filho S."/>
            <person name="Azevedo V."/>
            <person name="Baptista A.J."/>
            <person name="Bataus L.A.M."/>
            <person name="Batista J.S."/>
            <person name="Belo A."/>
            <person name="van den Berg C."/>
            <person name="Bogo M."/>
            <person name="Bonatto S."/>
            <person name="Bordignon J."/>
            <person name="Brigido M.M."/>
            <person name="Brito C.A."/>
            <person name="Brocchi M."/>
            <person name="Burity H.A."/>
            <person name="Camargo A.A."/>
            <person name="Cardoso D.D.P."/>
            <person name="Carneiro N.P."/>
            <person name="Carraro D.M."/>
            <person name="Carvalho C.M.B."/>
            <person name="Cascardo J.C.M."/>
            <person name="Cavada B.S."/>
            <person name="Chueire L.M.O."/>
            <person name="Creczynski-Pasa T.B."/>
            <person name="Cunha-Junior N.C."/>
            <person name="Fagundes N."/>
            <person name="Falcao C.L."/>
            <person name="Fantinatti F."/>
            <person name="Farias I.P."/>
            <person name="Felipe M.S.S."/>
            <person name="Ferrari L.P."/>
            <person name="Ferro J.A."/>
            <person name="Ferro M.I.T."/>
            <person name="Franco G.R."/>
            <person name="Freitas N.S.A."/>
            <person name="Furlan L.R."/>
            <person name="Gazzinelli R.T."/>
            <person name="Gomes E.A."/>
            <person name="Goncalves P.R."/>
            <person name="Grangeiro T.B."/>
            <person name="Grattapaglia D."/>
            <person name="Grisard E.C."/>
            <person name="Hanna E.S."/>
            <person name="Jardim S.N."/>
            <person name="Laurino J."/>
            <person name="Leoi L.C.T."/>
            <person name="Lima L.F.A."/>
            <person name="Loureiro M.F."/>
            <person name="Lyra M.C.C.P."/>
            <person name="Madeira H.M.F."/>
            <person name="Manfio G.P."/>
            <person name="Maranhao A.Q."/>
            <person name="Martins W.S."/>
            <person name="di Mauro S.M.Z."/>
            <person name="de Medeiros S.R.B."/>
            <person name="Meissner R.V."/>
            <person name="Moreira M.A.M."/>
            <person name="Nascimento F.F."/>
            <person name="Nicolas M.F."/>
            <person name="Oliveira J.G."/>
            <person name="Oliveira S.C."/>
            <person name="Paixao R.F.C."/>
            <person name="Parente J.A."/>
            <person name="Pedrosa F.O."/>
            <person name="Pena S.D.J."/>
            <person name="Pereira J.O."/>
            <person name="Pereira M."/>
            <person name="Pinto L.S.R.C."/>
            <person name="Pinto L.S."/>
            <person name="Porto J.I.R."/>
            <person name="Potrich D.P."/>
            <person name="Ramalho-Neto C.E."/>
            <person name="Reis A.M.M."/>
            <person name="Rigo L.U."/>
            <person name="Rondinelli E."/>
            <person name="Santos E.B.P."/>
            <person name="Santos F.R."/>
            <person name="Schneider M.P.C."/>
            <person name="Seuanez H.N."/>
            <person name="Silva A.M.R."/>
            <person name="da Silva A.L.C."/>
            <person name="Silva D.W."/>
            <person name="Silva R."/>
            <person name="Simoes I.C."/>
            <person name="Simon D."/>
            <person name="Soares C.M.A."/>
            <person name="Soares R.B.A."/>
            <person name="Souza E.M."/>
            <person name="Souza K.R.L."/>
            <person name="Souza R.C."/>
            <person name="Steffens M.B.R."/>
            <person name="Steindel M."/>
            <person name="Teixeira S.R."/>
            <person name="Urmenyi T."/>
            <person name="Vettore A."/>
            <person name="Wassem R."/>
            <person name="Zaha A."/>
            <person name="Simpson A.J.G."/>
        </authorList>
    </citation>
    <scope>NUCLEOTIDE SEQUENCE [LARGE SCALE GENOMIC DNA]</scope>
    <source>
        <strain>ATCC 12472 / DSM 30191 / JCM 1249 / CCUG 213 / NBRC 12614 / NCIMB 9131 / NCTC 9757 / MK</strain>
    </source>
</reference>
<proteinExistence type="inferred from homology"/>